<gene>
    <name evidence="1" type="primary">serS</name>
    <name type="ordered locus">SPH_0519</name>
</gene>
<protein>
    <recommendedName>
        <fullName evidence="1">Serine--tRNA ligase</fullName>
        <ecNumber evidence="1">6.1.1.11</ecNumber>
    </recommendedName>
    <alternativeName>
        <fullName evidence="1">Seryl-tRNA synthetase</fullName>
        <shortName evidence="1">SerRS</shortName>
    </alternativeName>
    <alternativeName>
        <fullName evidence="1">Seryl-tRNA(Ser/Sec) synthetase</fullName>
    </alternativeName>
</protein>
<organism>
    <name type="scientific">Streptococcus pneumoniae (strain Hungary19A-6)</name>
    <dbReference type="NCBI Taxonomy" id="487214"/>
    <lineage>
        <taxon>Bacteria</taxon>
        <taxon>Bacillati</taxon>
        <taxon>Bacillota</taxon>
        <taxon>Bacilli</taxon>
        <taxon>Lactobacillales</taxon>
        <taxon>Streptococcaceae</taxon>
        <taxon>Streptococcus</taxon>
    </lineage>
</organism>
<evidence type="ECO:0000255" key="1">
    <source>
        <dbReference type="HAMAP-Rule" id="MF_00176"/>
    </source>
</evidence>
<feature type="chain" id="PRO_1000098131" description="Serine--tRNA ligase">
    <location>
        <begin position="1"/>
        <end position="424"/>
    </location>
</feature>
<feature type="binding site" evidence="1">
    <location>
        <begin position="230"/>
        <end position="232"/>
    </location>
    <ligand>
        <name>L-serine</name>
        <dbReference type="ChEBI" id="CHEBI:33384"/>
    </ligand>
</feature>
<feature type="binding site" evidence="1">
    <location>
        <begin position="261"/>
        <end position="263"/>
    </location>
    <ligand>
        <name>ATP</name>
        <dbReference type="ChEBI" id="CHEBI:30616"/>
    </ligand>
</feature>
<feature type="binding site" evidence="1">
    <location>
        <position position="284"/>
    </location>
    <ligand>
        <name>L-serine</name>
        <dbReference type="ChEBI" id="CHEBI:33384"/>
    </ligand>
</feature>
<feature type="binding site" evidence="1">
    <location>
        <begin position="348"/>
        <end position="351"/>
    </location>
    <ligand>
        <name>ATP</name>
        <dbReference type="ChEBI" id="CHEBI:30616"/>
    </ligand>
</feature>
<feature type="binding site" evidence="1">
    <location>
        <position position="384"/>
    </location>
    <ligand>
        <name>L-serine</name>
        <dbReference type="ChEBI" id="CHEBI:33384"/>
    </ligand>
</feature>
<reference key="1">
    <citation type="journal article" date="2010" name="Genome Biol.">
        <title>Structure and dynamics of the pan-genome of Streptococcus pneumoniae and closely related species.</title>
        <authorList>
            <person name="Donati C."/>
            <person name="Hiller N.L."/>
            <person name="Tettelin H."/>
            <person name="Muzzi A."/>
            <person name="Croucher N.J."/>
            <person name="Angiuoli S.V."/>
            <person name="Oggioni M."/>
            <person name="Dunning Hotopp J.C."/>
            <person name="Hu F.Z."/>
            <person name="Riley D.R."/>
            <person name="Covacci A."/>
            <person name="Mitchell T.J."/>
            <person name="Bentley S.D."/>
            <person name="Kilian M."/>
            <person name="Ehrlich G.D."/>
            <person name="Rappuoli R."/>
            <person name="Moxon E.R."/>
            <person name="Masignani V."/>
        </authorList>
    </citation>
    <scope>NUCLEOTIDE SEQUENCE [LARGE SCALE GENOMIC DNA]</scope>
    <source>
        <strain>Hungary19A-6</strain>
    </source>
</reference>
<name>SYS_STRPI</name>
<accession>B1I9K5</accession>
<sequence length="424" mass="47693">MLDIKRIRTDFEAVAEKLATRGVDAAVLNEMKKIDAKRRNILVKVETLKAERNTVSAEIAQAKRNKENTDDKIAAMQNLSAEVKALDAELAEIDAKLTEFTTTLPNIPADSVPVGADEDDNVEVRRWGTPREFDFEPKAHWDLGEDLGILDWERGGKVTGARFLFYKGLGARLERAIYNFMLDEHGKEGYTEVITPYIVNHDSMFGTGQYPKFKEDTFELSDTNFVLIPTAEVPLTNYYRDEILDGKDLPIYFTAMSPSFRSEAGSAGRDTRGLIRLHQFHKVEMVKFAKPEESYEELEKMTANAENILQKLNLPYRVVALSTGDMGFSAAKTYDLEVWIPAQNNYREISSCSNTEDFQARRAQIRYRDEADGKVKLLHTLNGSGLAVGRTVAAILENYQNEDGSVTIPEALRPYMGGAEVIKP</sequence>
<comment type="function">
    <text evidence="1">Catalyzes the attachment of serine to tRNA(Ser). Is also able to aminoacylate tRNA(Sec) with serine, to form the misacylated tRNA L-seryl-tRNA(Sec), which will be further converted into selenocysteinyl-tRNA(Sec).</text>
</comment>
<comment type="catalytic activity">
    <reaction evidence="1">
        <text>tRNA(Ser) + L-serine + ATP = L-seryl-tRNA(Ser) + AMP + diphosphate + H(+)</text>
        <dbReference type="Rhea" id="RHEA:12292"/>
        <dbReference type="Rhea" id="RHEA-COMP:9669"/>
        <dbReference type="Rhea" id="RHEA-COMP:9703"/>
        <dbReference type="ChEBI" id="CHEBI:15378"/>
        <dbReference type="ChEBI" id="CHEBI:30616"/>
        <dbReference type="ChEBI" id="CHEBI:33019"/>
        <dbReference type="ChEBI" id="CHEBI:33384"/>
        <dbReference type="ChEBI" id="CHEBI:78442"/>
        <dbReference type="ChEBI" id="CHEBI:78533"/>
        <dbReference type="ChEBI" id="CHEBI:456215"/>
        <dbReference type="EC" id="6.1.1.11"/>
    </reaction>
</comment>
<comment type="catalytic activity">
    <reaction evidence="1">
        <text>tRNA(Sec) + L-serine + ATP = L-seryl-tRNA(Sec) + AMP + diphosphate + H(+)</text>
        <dbReference type="Rhea" id="RHEA:42580"/>
        <dbReference type="Rhea" id="RHEA-COMP:9742"/>
        <dbReference type="Rhea" id="RHEA-COMP:10128"/>
        <dbReference type="ChEBI" id="CHEBI:15378"/>
        <dbReference type="ChEBI" id="CHEBI:30616"/>
        <dbReference type="ChEBI" id="CHEBI:33019"/>
        <dbReference type="ChEBI" id="CHEBI:33384"/>
        <dbReference type="ChEBI" id="CHEBI:78442"/>
        <dbReference type="ChEBI" id="CHEBI:78533"/>
        <dbReference type="ChEBI" id="CHEBI:456215"/>
        <dbReference type="EC" id="6.1.1.11"/>
    </reaction>
</comment>
<comment type="pathway">
    <text evidence="1">Aminoacyl-tRNA biosynthesis; selenocysteinyl-tRNA(Sec) biosynthesis; L-seryl-tRNA(Sec) from L-serine and tRNA(Sec): step 1/1.</text>
</comment>
<comment type="subunit">
    <text evidence="1">Homodimer. The tRNA molecule binds across the dimer.</text>
</comment>
<comment type="subcellular location">
    <subcellularLocation>
        <location evidence="1">Cytoplasm</location>
    </subcellularLocation>
</comment>
<comment type="domain">
    <text evidence="1">Consists of two distinct domains, a catalytic core and a N-terminal extension that is involved in tRNA binding.</text>
</comment>
<comment type="similarity">
    <text evidence="1">Belongs to the class-II aminoacyl-tRNA synthetase family. Type-1 seryl-tRNA synthetase subfamily.</text>
</comment>
<proteinExistence type="inferred from homology"/>
<dbReference type="EC" id="6.1.1.11" evidence="1"/>
<dbReference type="EMBL" id="CP000936">
    <property type="protein sequence ID" value="ACA35647.1"/>
    <property type="molecule type" value="Genomic_DNA"/>
</dbReference>
<dbReference type="RefSeq" id="WP_000884262.1">
    <property type="nucleotide sequence ID" value="NC_010380.1"/>
</dbReference>
<dbReference type="SMR" id="B1I9K5"/>
<dbReference type="KEGG" id="spv:SPH_0519"/>
<dbReference type="HOGENOM" id="CLU_023797_1_1_9"/>
<dbReference type="UniPathway" id="UPA00906">
    <property type="reaction ID" value="UER00895"/>
</dbReference>
<dbReference type="Proteomes" id="UP000002163">
    <property type="component" value="Chromosome"/>
</dbReference>
<dbReference type="GO" id="GO:0005737">
    <property type="term" value="C:cytoplasm"/>
    <property type="evidence" value="ECO:0007669"/>
    <property type="project" value="UniProtKB-SubCell"/>
</dbReference>
<dbReference type="GO" id="GO:0005524">
    <property type="term" value="F:ATP binding"/>
    <property type="evidence" value="ECO:0007669"/>
    <property type="project" value="UniProtKB-UniRule"/>
</dbReference>
<dbReference type="GO" id="GO:0140096">
    <property type="term" value="F:catalytic activity, acting on a protein"/>
    <property type="evidence" value="ECO:0007669"/>
    <property type="project" value="UniProtKB-ARBA"/>
</dbReference>
<dbReference type="GO" id="GO:0004828">
    <property type="term" value="F:serine-tRNA ligase activity"/>
    <property type="evidence" value="ECO:0007669"/>
    <property type="project" value="UniProtKB-UniRule"/>
</dbReference>
<dbReference type="GO" id="GO:0016740">
    <property type="term" value="F:transferase activity"/>
    <property type="evidence" value="ECO:0007669"/>
    <property type="project" value="UniProtKB-ARBA"/>
</dbReference>
<dbReference type="GO" id="GO:0016260">
    <property type="term" value="P:selenocysteine biosynthetic process"/>
    <property type="evidence" value="ECO:0007669"/>
    <property type="project" value="UniProtKB-UniRule"/>
</dbReference>
<dbReference type="GO" id="GO:0006434">
    <property type="term" value="P:seryl-tRNA aminoacylation"/>
    <property type="evidence" value="ECO:0007669"/>
    <property type="project" value="UniProtKB-UniRule"/>
</dbReference>
<dbReference type="CDD" id="cd00770">
    <property type="entry name" value="SerRS_core"/>
    <property type="match status" value="1"/>
</dbReference>
<dbReference type="Gene3D" id="3.30.930.10">
    <property type="entry name" value="Bira Bifunctional Protein, Domain 2"/>
    <property type="match status" value="1"/>
</dbReference>
<dbReference type="Gene3D" id="1.10.287.40">
    <property type="entry name" value="Serine-tRNA synthetase, tRNA binding domain"/>
    <property type="match status" value="1"/>
</dbReference>
<dbReference type="HAMAP" id="MF_00176">
    <property type="entry name" value="Ser_tRNA_synth_type1"/>
    <property type="match status" value="1"/>
</dbReference>
<dbReference type="InterPro" id="IPR002314">
    <property type="entry name" value="aa-tRNA-synt_IIb"/>
</dbReference>
<dbReference type="InterPro" id="IPR006195">
    <property type="entry name" value="aa-tRNA-synth_II"/>
</dbReference>
<dbReference type="InterPro" id="IPR045864">
    <property type="entry name" value="aa-tRNA-synth_II/BPL/LPL"/>
</dbReference>
<dbReference type="InterPro" id="IPR002317">
    <property type="entry name" value="Ser-tRNA-ligase_type_1"/>
</dbReference>
<dbReference type="InterPro" id="IPR015866">
    <property type="entry name" value="Ser-tRNA-synth_1_N"/>
</dbReference>
<dbReference type="InterPro" id="IPR042103">
    <property type="entry name" value="SerRS_1_N_sf"/>
</dbReference>
<dbReference type="InterPro" id="IPR033729">
    <property type="entry name" value="SerRS_core"/>
</dbReference>
<dbReference type="InterPro" id="IPR010978">
    <property type="entry name" value="tRNA-bd_arm"/>
</dbReference>
<dbReference type="NCBIfam" id="TIGR00414">
    <property type="entry name" value="serS"/>
    <property type="match status" value="1"/>
</dbReference>
<dbReference type="PANTHER" id="PTHR43697:SF1">
    <property type="entry name" value="SERINE--TRNA LIGASE"/>
    <property type="match status" value="1"/>
</dbReference>
<dbReference type="PANTHER" id="PTHR43697">
    <property type="entry name" value="SERYL-TRNA SYNTHETASE"/>
    <property type="match status" value="1"/>
</dbReference>
<dbReference type="Pfam" id="PF02403">
    <property type="entry name" value="Seryl_tRNA_N"/>
    <property type="match status" value="1"/>
</dbReference>
<dbReference type="Pfam" id="PF00587">
    <property type="entry name" value="tRNA-synt_2b"/>
    <property type="match status" value="1"/>
</dbReference>
<dbReference type="PIRSF" id="PIRSF001529">
    <property type="entry name" value="Ser-tRNA-synth_IIa"/>
    <property type="match status" value="1"/>
</dbReference>
<dbReference type="PRINTS" id="PR00981">
    <property type="entry name" value="TRNASYNTHSER"/>
</dbReference>
<dbReference type="SUPFAM" id="SSF55681">
    <property type="entry name" value="Class II aaRS and biotin synthetases"/>
    <property type="match status" value="1"/>
</dbReference>
<dbReference type="SUPFAM" id="SSF46589">
    <property type="entry name" value="tRNA-binding arm"/>
    <property type="match status" value="1"/>
</dbReference>
<dbReference type="PROSITE" id="PS50862">
    <property type="entry name" value="AA_TRNA_LIGASE_II"/>
    <property type="match status" value="1"/>
</dbReference>
<keyword id="KW-0030">Aminoacyl-tRNA synthetase</keyword>
<keyword id="KW-0067">ATP-binding</keyword>
<keyword id="KW-0963">Cytoplasm</keyword>
<keyword id="KW-0436">Ligase</keyword>
<keyword id="KW-0547">Nucleotide-binding</keyword>
<keyword id="KW-0648">Protein biosynthesis</keyword>